<evidence type="ECO:0000255" key="1">
    <source>
        <dbReference type="HAMAP-Rule" id="MF_01270"/>
    </source>
</evidence>
<keyword id="KW-0067">ATP-binding</keyword>
<keyword id="KW-0119">Carbohydrate metabolism</keyword>
<keyword id="KW-0418">Kinase</keyword>
<keyword id="KW-0547">Nucleotide-binding</keyword>
<keyword id="KW-1185">Reference proteome</keyword>
<keyword id="KW-0808">Transferase</keyword>
<protein>
    <recommendedName>
        <fullName evidence="1">Anhydro-N-acetylmuramic acid kinase</fullName>
        <ecNumber evidence="1">2.7.1.170</ecNumber>
    </recommendedName>
    <alternativeName>
        <fullName evidence="1">AnhMurNAc kinase</fullName>
    </alternativeName>
</protein>
<reference key="1">
    <citation type="journal article" date="2009" name="PLoS Genet.">
        <title>Organised genome dynamics in the Escherichia coli species results in highly diverse adaptive paths.</title>
        <authorList>
            <person name="Touchon M."/>
            <person name="Hoede C."/>
            <person name="Tenaillon O."/>
            <person name="Barbe V."/>
            <person name="Baeriswyl S."/>
            <person name="Bidet P."/>
            <person name="Bingen E."/>
            <person name="Bonacorsi S."/>
            <person name="Bouchier C."/>
            <person name="Bouvet O."/>
            <person name="Calteau A."/>
            <person name="Chiapello H."/>
            <person name="Clermont O."/>
            <person name="Cruveiller S."/>
            <person name="Danchin A."/>
            <person name="Diard M."/>
            <person name="Dossat C."/>
            <person name="Karoui M.E."/>
            <person name="Frapy E."/>
            <person name="Garry L."/>
            <person name="Ghigo J.M."/>
            <person name="Gilles A.M."/>
            <person name="Johnson J."/>
            <person name="Le Bouguenec C."/>
            <person name="Lescat M."/>
            <person name="Mangenot S."/>
            <person name="Martinez-Jehanne V."/>
            <person name="Matic I."/>
            <person name="Nassif X."/>
            <person name="Oztas S."/>
            <person name="Petit M.A."/>
            <person name="Pichon C."/>
            <person name="Rouy Z."/>
            <person name="Ruf C.S."/>
            <person name="Schneider D."/>
            <person name="Tourret J."/>
            <person name="Vacherie B."/>
            <person name="Vallenet D."/>
            <person name="Medigue C."/>
            <person name="Rocha E.P.C."/>
            <person name="Denamur E."/>
        </authorList>
    </citation>
    <scope>NUCLEOTIDE SEQUENCE [LARGE SCALE GENOMIC DNA]</scope>
    <source>
        <strain>S88 / ExPEC</strain>
    </source>
</reference>
<gene>
    <name evidence="1" type="primary">anmK</name>
    <name type="ordered locus">ECS88_1688</name>
</gene>
<proteinExistence type="inferred from homology"/>
<name>ANMK_ECO45</name>
<sequence length="369" mass="39503">MKSGRFIGVMSGTSLDGVDVVLATIDEHRVAQLASLSWPIPVSLKQAVLDICQGQQLTLSQFGQLDTQLGRLFADAVNALLKEQNLQARDIVAIGCHGQTVWHEPTGVAPHTLQIGDNNQIVARTGITVVGDFRRRDIALGGHGAPLVPAFHHALLAHPTERRMVLNIGGIANLSLLIPGQPVGGYDTGPGNMLMDAWIWRQAGKPYDKDAEWARAGKVILPLLQNMLSDPYFSQPAPKSTGREYFNYGWLERHLRHFPGVDPRDVQATLAELTAVTISEQVLLSGGCERLMVCGGGGRNPLLMARLAALLPGTEVTTTDAVGISGDDMEALAFAWLAWRTLAGLPGNLPSVTGASQETVLGAIFPANP</sequence>
<accession>B7M9Z4</accession>
<comment type="function">
    <text evidence="1">Catalyzes the specific phosphorylation of 1,6-anhydro-N-acetylmuramic acid (anhMurNAc) with the simultaneous cleavage of the 1,6-anhydro ring, generating MurNAc-6-P. Is required for the utilization of anhMurNAc either imported from the medium or derived from its own cell wall murein, and thus plays a role in cell wall recycling.</text>
</comment>
<comment type="catalytic activity">
    <reaction evidence="1">
        <text>1,6-anhydro-N-acetyl-beta-muramate + ATP + H2O = N-acetyl-D-muramate 6-phosphate + ADP + H(+)</text>
        <dbReference type="Rhea" id="RHEA:24952"/>
        <dbReference type="ChEBI" id="CHEBI:15377"/>
        <dbReference type="ChEBI" id="CHEBI:15378"/>
        <dbReference type="ChEBI" id="CHEBI:30616"/>
        <dbReference type="ChEBI" id="CHEBI:58690"/>
        <dbReference type="ChEBI" id="CHEBI:58722"/>
        <dbReference type="ChEBI" id="CHEBI:456216"/>
        <dbReference type="EC" id="2.7.1.170"/>
    </reaction>
</comment>
<comment type="pathway">
    <text evidence="1">Amino-sugar metabolism; 1,6-anhydro-N-acetylmuramate degradation.</text>
</comment>
<comment type="pathway">
    <text evidence="1">Cell wall biogenesis; peptidoglycan recycling.</text>
</comment>
<comment type="similarity">
    <text evidence="1">Belongs to the anhydro-N-acetylmuramic acid kinase family.</text>
</comment>
<feature type="chain" id="PRO_1000140153" description="Anhydro-N-acetylmuramic acid kinase">
    <location>
        <begin position="1"/>
        <end position="369"/>
    </location>
</feature>
<feature type="binding site" evidence="1">
    <location>
        <begin position="12"/>
        <end position="19"/>
    </location>
    <ligand>
        <name>ATP</name>
        <dbReference type="ChEBI" id="CHEBI:30616"/>
    </ligand>
</feature>
<organism>
    <name type="scientific">Escherichia coli O45:K1 (strain S88 / ExPEC)</name>
    <dbReference type="NCBI Taxonomy" id="585035"/>
    <lineage>
        <taxon>Bacteria</taxon>
        <taxon>Pseudomonadati</taxon>
        <taxon>Pseudomonadota</taxon>
        <taxon>Gammaproteobacteria</taxon>
        <taxon>Enterobacterales</taxon>
        <taxon>Enterobacteriaceae</taxon>
        <taxon>Escherichia</taxon>
    </lineage>
</organism>
<dbReference type="EC" id="2.7.1.170" evidence="1"/>
<dbReference type="EMBL" id="CU928161">
    <property type="protein sequence ID" value="CAR03001.1"/>
    <property type="molecule type" value="Genomic_DNA"/>
</dbReference>
<dbReference type="RefSeq" id="WP_000835051.1">
    <property type="nucleotide sequence ID" value="NC_011742.1"/>
</dbReference>
<dbReference type="SMR" id="B7M9Z4"/>
<dbReference type="KEGG" id="ecz:ECS88_1688"/>
<dbReference type="HOGENOM" id="CLU_038782_0_0_6"/>
<dbReference type="UniPathway" id="UPA00343"/>
<dbReference type="UniPathway" id="UPA00544"/>
<dbReference type="Proteomes" id="UP000000747">
    <property type="component" value="Chromosome"/>
</dbReference>
<dbReference type="GO" id="GO:0005524">
    <property type="term" value="F:ATP binding"/>
    <property type="evidence" value="ECO:0007669"/>
    <property type="project" value="UniProtKB-UniRule"/>
</dbReference>
<dbReference type="GO" id="GO:0016301">
    <property type="term" value="F:kinase activity"/>
    <property type="evidence" value="ECO:0007669"/>
    <property type="project" value="UniProtKB-KW"/>
</dbReference>
<dbReference type="GO" id="GO:0016773">
    <property type="term" value="F:phosphotransferase activity, alcohol group as acceptor"/>
    <property type="evidence" value="ECO:0007669"/>
    <property type="project" value="UniProtKB-UniRule"/>
</dbReference>
<dbReference type="GO" id="GO:0097175">
    <property type="term" value="P:1,6-anhydro-N-acetyl-beta-muramic acid catabolic process"/>
    <property type="evidence" value="ECO:0007669"/>
    <property type="project" value="UniProtKB-UniRule"/>
</dbReference>
<dbReference type="GO" id="GO:0006040">
    <property type="term" value="P:amino sugar metabolic process"/>
    <property type="evidence" value="ECO:0007669"/>
    <property type="project" value="InterPro"/>
</dbReference>
<dbReference type="GO" id="GO:0009254">
    <property type="term" value="P:peptidoglycan turnover"/>
    <property type="evidence" value="ECO:0007669"/>
    <property type="project" value="UniProtKB-UniRule"/>
</dbReference>
<dbReference type="CDD" id="cd24050">
    <property type="entry name" value="ASKHA_NBD_ANMK"/>
    <property type="match status" value="1"/>
</dbReference>
<dbReference type="FunFam" id="3.30.420.40:FF:000090">
    <property type="entry name" value="Anhydro-N-acetylmuramic acid kinase"/>
    <property type="match status" value="1"/>
</dbReference>
<dbReference type="Gene3D" id="3.30.420.40">
    <property type="match status" value="2"/>
</dbReference>
<dbReference type="HAMAP" id="MF_01270">
    <property type="entry name" value="AnhMurNAc_kinase"/>
    <property type="match status" value="1"/>
</dbReference>
<dbReference type="InterPro" id="IPR005338">
    <property type="entry name" value="Anhydro_N_Ac-Mur_kinase"/>
</dbReference>
<dbReference type="InterPro" id="IPR043129">
    <property type="entry name" value="ATPase_NBD"/>
</dbReference>
<dbReference type="NCBIfam" id="NF007138">
    <property type="entry name" value="PRK09585.1-1"/>
    <property type="match status" value="1"/>
</dbReference>
<dbReference type="NCBIfam" id="NF007139">
    <property type="entry name" value="PRK09585.1-3"/>
    <property type="match status" value="1"/>
</dbReference>
<dbReference type="NCBIfam" id="NF007148">
    <property type="entry name" value="PRK09585.3-2"/>
    <property type="match status" value="1"/>
</dbReference>
<dbReference type="PANTHER" id="PTHR30605">
    <property type="entry name" value="ANHYDRO-N-ACETYLMURAMIC ACID KINASE"/>
    <property type="match status" value="1"/>
</dbReference>
<dbReference type="PANTHER" id="PTHR30605:SF0">
    <property type="entry name" value="ANHYDRO-N-ACETYLMURAMIC ACID KINASE"/>
    <property type="match status" value="1"/>
</dbReference>
<dbReference type="Pfam" id="PF03702">
    <property type="entry name" value="AnmK"/>
    <property type="match status" value="1"/>
</dbReference>
<dbReference type="SUPFAM" id="SSF53067">
    <property type="entry name" value="Actin-like ATPase domain"/>
    <property type="match status" value="1"/>
</dbReference>